<protein>
    <recommendedName>
        <fullName evidence="1">Glucose-1-phosphate adenylyltransferase</fullName>
        <ecNumber evidence="1">2.7.7.27</ecNumber>
    </recommendedName>
    <alternativeName>
        <fullName evidence="1">ADP-glucose pyrophosphorylase</fullName>
        <shortName evidence="1">ADPGlc PPase</shortName>
    </alternativeName>
    <alternativeName>
        <fullName evidence="1">ADP-glucose synthase</fullName>
    </alternativeName>
</protein>
<name>GLGC_ECOLC</name>
<organism>
    <name type="scientific">Escherichia coli (strain ATCC 8739 / DSM 1576 / NBRC 3972 / NCIMB 8545 / WDCM 00012 / Crooks)</name>
    <dbReference type="NCBI Taxonomy" id="481805"/>
    <lineage>
        <taxon>Bacteria</taxon>
        <taxon>Pseudomonadati</taxon>
        <taxon>Pseudomonadota</taxon>
        <taxon>Gammaproteobacteria</taxon>
        <taxon>Enterobacterales</taxon>
        <taxon>Enterobacteriaceae</taxon>
        <taxon>Escherichia</taxon>
    </lineage>
</organism>
<feature type="chain" id="PRO_1000082595" description="Glucose-1-phosphate adenylyltransferase">
    <location>
        <begin position="1"/>
        <end position="431"/>
    </location>
</feature>
<feature type="binding site" evidence="1">
    <location>
        <position position="39"/>
    </location>
    <ligand>
        <name>beta-D-fructose 1,6-bisphosphate</name>
        <dbReference type="ChEBI" id="CHEBI:32966"/>
    </ligand>
</feature>
<feature type="binding site" evidence="1">
    <location>
        <position position="40"/>
    </location>
    <ligand>
        <name>AMP</name>
        <dbReference type="ChEBI" id="CHEBI:456215"/>
    </ligand>
</feature>
<feature type="binding site" evidence="1">
    <location>
        <position position="46"/>
    </location>
    <ligand>
        <name>AMP</name>
        <dbReference type="ChEBI" id="CHEBI:456215"/>
    </ligand>
</feature>
<feature type="binding site" evidence="1">
    <location>
        <position position="52"/>
    </location>
    <ligand>
        <name>AMP</name>
        <dbReference type="ChEBI" id="CHEBI:456215"/>
    </ligand>
</feature>
<feature type="binding site" evidence="1">
    <location>
        <position position="114"/>
    </location>
    <ligand>
        <name>alpha-D-glucose 1-phosphate</name>
        <dbReference type="ChEBI" id="CHEBI:58601"/>
    </ligand>
</feature>
<feature type="binding site" evidence="1">
    <location>
        <position position="130"/>
    </location>
    <ligand>
        <name>AMP</name>
        <dbReference type="ChEBI" id="CHEBI:456215"/>
    </ligand>
</feature>
<feature type="binding site" evidence="1">
    <location>
        <position position="179"/>
    </location>
    <ligand>
        <name>alpha-D-glucose 1-phosphate</name>
        <dbReference type="ChEBI" id="CHEBI:58601"/>
    </ligand>
</feature>
<feature type="binding site" evidence="1">
    <location>
        <begin position="194"/>
        <end position="195"/>
    </location>
    <ligand>
        <name>alpha-D-glucose 1-phosphate</name>
        <dbReference type="ChEBI" id="CHEBI:58601"/>
    </ligand>
</feature>
<feature type="binding site" evidence="1">
    <location>
        <position position="212"/>
    </location>
    <ligand>
        <name>alpha-D-glucose 1-phosphate</name>
        <dbReference type="ChEBI" id="CHEBI:58601"/>
    </ligand>
</feature>
<feature type="binding site" evidence="1">
    <location>
        <position position="370"/>
    </location>
    <ligand>
        <name>AMP</name>
        <dbReference type="ChEBI" id="CHEBI:456215"/>
    </ligand>
</feature>
<feature type="binding site" evidence="1">
    <location>
        <position position="386"/>
    </location>
    <ligand>
        <name>AMP</name>
        <dbReference type="ChEBI" id="CHEBI:456215"/>
    </ligand>
</feature>
<feature type="binding site" evidence="1">
    <location>
        <begin position="419"/>
        <end position="423"/>
    </location>
    <ligand>
        <name>beta-D-fructose 1,6-bisphosphate</name>
        <dbReference type="ChEBI" id="CHEBI:32966"/>
    </ligand>
</feature>
<feature type="binding site" evidence="1">
    <location>
        <begin position="429"/>
        <end position="431"/>
    </location>
    <ligand>
        <name>beta-D-fructose 1,6-bisphosphate</name>
        <dbReference type="ChEBI" id="CHEBI:32966"/>
    </ligand>
</feature>
<feature type="site" description="Could play a key role in the communication between the regulatory and the substrate sites" evidence="1">
    <location>
        <position position="74"/>
    </location>
</feature>
<feature type="site" description="Could play a key role in the communication between the regulatory and the substrate sites" evidence="1">
    <location>
        <position position="113"/>
    </location>
</feature>
<proteinExistence type="inferred from homology"/>
<accession>B1IP34</accession>
<reference key="1">
    <citation type="submission" date="2008-02" db="EMBL/GenBank/DDBJ databases">
        <title>Complete sequence of Escherichia coli C str. ATCC 8739.</title>
        <authorList>
            <person name="Copeland A."/>
            <person name="Lucas S."/>
            <person name="Lapidus A."/>
            <person name="Glavina del Rio T."/>
            <person name="Dalin E."/>
            <person name="Tice H."/>
            <person name="Bruce D."/>
            <person name="Goodwin L."/>
            <person name="Pitluck S."/>
            <person name="Kiss H."/>
            <person name="Brettin T."/>
            <person name="Detter J.C."/>
            <person name="Han C."/>
            <person name="Kuske C.R."/>
            <person name="Schmutz J."/>
            <person name="Larimer F."/>
            <person name="Land M."/>
            <person name="Hauser L."/>
            <person name="Kyrpides N."/>
            <person name="Mikhailova N."/>
            <person name="Ingram L."/>
            <person name="Richardson P."/>
        </authorList>
    </citation>
    <scope>NUCLEOTIDE SEQUENCE [LARGE SCALE GENOMIC DNA]</scope>
    <source>
        <strain>ATCC 8739 / DSM 1576 / NBRC 3972 / NCIMB 8545 / WDCM 00012 / Crooks</strain>
    </source>
</reference>
<comment type="function">
    <text evidence="1">Involved in the biosynthesis of ADP-glucose, a building block required for the elongation reactions to produce glycogen. Catalyzes the reaction between ATP and alpha-D-glucose 1-phosphate (G1P) to produce pyrophosphate and ADP-Glc.</text>
</comment>
<comment type="catalytic activity">
    <reaction evidence="1">
        <text>alpha-D-glucose 1-phosphate + ATP + H(+) = ADP-alpha-D-glucose + diphosphate</text>
        <dbReference type="Rhea" id="RHEA:12120"/>
        <dbReference type="ChEBI" id="CHEBI:15378"/>
        <dbReference type="ChEBI" id="CHEBI:30616"/>
        <dbReference type="ChEBI" id="CHEBI:33019"/>
        <dbReference type="ChEBI" id="CHEBI:57498"/>
        <dbReference type="ChEBI" id="CHEBI:58601"/>
        <dbReference type="EC" id="2.7.7.27"/>
    </reaction>
</comment>
<comment type="activity regulation">
    <text evidence="1">Allosterically activated by fructose-1,6-bisphosphate (F16BP) and inhibited by AMP.</text>
</comment>
<comment type="pathway">
    <text evidence="1">Glycan biosynthesis; glycogen biosynthesis.</text>
</comment>
<comment type="subunit">
    <text evidence="1">Homotetramer.</text>
</comment>
<comment type="similarity">
    <text evidence="1">Belongs to the bacterial/plant glucose-1-phosphate adenylyltransferase family.</text>
</comment>
<dbReference type="EC" id="2.7.7.27" evidence="1"/>
<dbReference type="EMBL" id="CP000946">
    <property type="protein sequence ID" value="ACA75960.1"/>
    <property type="molecule type" value="Genomic_DNA"/>
</dbReference>
<dbReference type="RefSeq" id="WP_000253975.1">
    <property type="nucleotide sequence ID" value="NZ_MTFT01000001.1"/>
</dbReference>
<dbReference type="SMR" id="B1IP34"/>
<dbReference type="GeneID" id="93778559"/>
<dbReference type="KEGG" id="ecl:EcolC_0282"/>
<dbReference type="HOGENOM" id="CLU_029499_14_1_6"/>
<dbReference type="UniPathway" id="UPA00164"/>
<dbReference type="GO" id="GO:0005524">
    <property type="term" value="F:ATP binding"/>
    <property type="evidence" value="ECO:0007669"/>
    <property type="project" value="UniProtKB-KW"/>
</dbReference>
<dbReference type="GO" id="GO:0008878">
    <property type="term" value="F:glucose-1-phosphate adenylyltransferase activity"/>
    <property type="evidence" value="ECO:0007669"/>
    <property type="project" value="UniProtKB-UniRule"/>
</dbReference>
<dbReference type="GO" id="GO:0005978">
    <property type="term" value="P:glycogen biosynthetic process"/>
    <property type="evidence" value="ECO:0007669"/>
    <property type="project" value="UniProtKB-UniRule"/>
</dbReference>
<dbReference type="CDD" id="cd02508">
    <property type="entry name" value="ADP_Glucose_PP"/>
    <property type="match status" value="1"/>
</dbReference>
<dbReference type="CDD" id="cd04651">
    <property type="entry name" value="LbH_G1P_AT_C"/>
    <property type="match status" value="1"/>
</dbReference>
<dbReference type="FunFam" id="2.160.10.10:FF:000006">
    <property type="entry name" value="Glucose-1-phosphate adenylyltransferase"/>
    <property type="match status" value="1"/>
</dbReference>
<dbReference type="FunFam" id="3.90.550.10:FF:000014">
    <property type="entry name" value="Glucose-1-phosphate adenylyltransferase"/>
    <property type="match status" value="1"/>
</dbReference>
<dbReference type="Gene3D" id="2.160.10.10">
    <property type="entry name" value="Hexapeptide repeat proteins"/>
    <property type="match status" value="1"/>
</dbReference>
<dbReference type="Gene3D" id="3.90.550.10">
    <property type="entry name" value="Spore Coat Polysaccharide Biosynthesis Protein SpsA, Chain A"/>
    <property type="match status" value="1"/>
</dbReference>
<dbReference type="HAMAP" id="MF_00624">
    <property type="entry name" value="GlgC"/>
    <property type="match status" value="1"/>
</dbReference>
<dbReference type="InterPro" id="IPR011831">
    <property type="entry name" value="ADP-Glc_PPase"/>
</dbReference>
<dbReference type="InterPro" id="IPR005836">
    <property type="entry name" value="ADP_Glu_pyroP_CS"/>
</dbReference>
<dbReference type="InterPro" id="IPR023049">
    <property type="entry name" value="GlgC_bac"/>
</dbReference>
<dbReference type="InterPro" id="IPR056818">
    <property type="entry name" value="GlmU/GlgC-like_hexapep"/>
</dbReference>
<dbReference type="InterPro" id="IPR005835">
    <property type="entry name" value="NTP_transferase_dom"/>
</dbReference>
<dbReference type="InterPro" id="IPR029044">
    <property type="entry name" value="Nucleotide-diphossugar_trans"/>
</dbReference>
<dbReference type="InterPro" id="IPR011004">
    <property type="entry name" value="Trimer_LpxA-like_sf"/>
</dbReference>
<dbReference type="NCBIfam" id="TIGR02091">
    <property type="entry name" value="glgC"/>
    <property type="match status" value="1"/>
</dbReference>
<dbReference type="NCBIfam" id="NF001947">
    <property type="entry name" value="PRK00725.1"/>
    <property type="match status" value="1"/>
</dbReference>
<dbReference type="NCBIfam" id="NF002023">
    <property type="entry name" value="PRK00844.1"/>
    <property type="match status" value="1"/>
</dbReference>
<dbReference type="PANTHER" id="PTHR43523:SF2">
    <property type="entry name" value="GLUCOSE-1-PHOSPHATE ADENYLYLTRANSFERASE"/>
    <property type="match status" value="1"/>
</dbReference>
<dbReference type="PANTHER" id="PTHR43523">
    <property type="entry name" value="GLUCOSE-1-PHOSPHATE ADENYLYLTRANSFERASE-RELATED"/>
    <property type="match status" value="1"/>
</dbReference>
<dbReference type="Pfam" id="PF24894">
    <property type="entry name" value="Hexapep_GlmU"/>
    <property type="match status" value="1"/>
</dbReference>
<dbReference type="Pfam" id="PF00483">
    <property type="entry name" value="NTP_transferase"/>
    <property type="match status" value="1"/>
</dbReference>
<dbReference type="SUPFAM" id="SSF53448">
    <property type="entry name" value="Nucleotide-diphospho-sugar transferases"/>
    <property type="match status" value="1"/>
</dbReference>
<dbReference type="SUPFAM" id="SSF51161">
    <property type="entry name" value="Trimeric LpxA-like enzymes"/>
    <property type="match status" value="1"/>
</dbReference>
<dbReference type="PROSITE" id="PS00808">
    <property type="entry name" value="ADP_GLC_PYROPHOSPH_1"/>
    <property type="match status" value="1"/>
</dbReference>
<dbReference type="PROSITE" id="PS00809">
    <property type="entry name" value="ADP_GLC_PYROPHOSPH_2"/>
    <property type="match status" value="1"/>
</dbReference>
<dbReference type="PROSITE" id="PS00810">
    <property type="entry name" value="ADP_GLC_PYROPHOSPH_3"/>
    <property type="match status" value="1"/>
</dbReference>
<gene>
    <name evidence="1" type="primary">glgC</name>
    <name type="ordered locus">EcolC_0282</name>
</gene>
<evidence type="ECO:0000255" key="1">
    <source>
        <dbReference type="HAMAP-Rule" id="MF_00624"/>
    </source>
</evidence>
<sequence length="431" mass="48698">MVSLEKNDHLMLARQLPLKSVALILAGGRGTRLKDLTNKRAKPAVHFGGKFRIIDFALSNCINSGIRRMGVITQYQSHTLVQHIQRGWSFFNEEMNEFVDLLPAQQRMKGENWYRGTADAVTQNLDIIRRYKAEYVVILAGDHIYKQDYSRMLIDHVEKGARCTVACMPVPIEEASAFGVMAVDENDKIIEFVEKPANPPSMPNDPSKSLASMGIYVFDADYLYELLEEDDRDENSSHDFGKDLIPKITEAGLAYAHPFPLSCVQSDPDAEPYWRDVGTLEAYWKANLDLASVVPELDMYDRNWPIRTYNESLPPAKFVQDRSGSHGMTLNSLVSGGCVISGSVVVQSVLFSRVRVNSFCNIDSAVLLPEVWVGRSCRLRRCVIDRACVIPEGMVIGENAEEDARRFYRSEEGIVLVTREMLRKLGHKQER</sequence>
<keyword id="KW-0021">Allosteric enzyme</keyword>
<keyword id="KW-0067">ATP-binding</keyword>
<keyword id="KW-0119">Carbohydrate metabolism</keyword>
<keyword id="KW-0320">Glycogen biosynthesis</keyword>
<keyword id="KW-0321">Glycogen metabolism</keyword>
<keyword id="KW-0547">Nucleotide-binding</keyword>
<keyword id="KW-0548">Nucleotidyltransferase</keyword>
<keyword id="KW-0808">Transferase</keyword>